<comment type="function">
    <text evidence="1">Involved in mRNA degradation. Catalyzes the phosphorolysis of single-stranded polyribonucleotides processively in the 3'- to 5'-direction.</text>
</comment>
<comment type="catalytic activity">
    <reaction evidence="1">
        <text>RNA(n+1) + phosphate = RNA(n) + a ribonucleoside 5'-diphosphate</text>
        <dbReference type="Rhea" id="RHEA:22096"/>
        <dbReference type="Rhea" id="RHEA-COMP:14527"/>
        <dbReference type="Rhea" id="RHEA-COMP:17342"/>
        <dbReference type="ChEBI" id="CHEBI:43474"/>
        <dbReference type="ChEBI" id="CHEBI:57930"/>
        <dbReference type="ChEBI" id="CHEBI:140395"/>
        <dbReference type="EC" id="2.7.7.8"/>
    </reaction>
</comment>
<comment type="cofactor">
    <cofactor evidence="1">
        <name>Mg(2+)</name>
        <dbReference type="ChEBI" id="CHEBI:18420"/>
    </cofactor>
</comment>
<comment type="subcellular location">
    <subcellularLocation>
        <location evidence="1">Cytoplasm</location>
    </subcellularLocation>
</comment>
<comment type="similarity">
    <text evidence="1">Belongs to the polyribonucleotide nucleotidyltransferase family.</text>
</comment>
<keyword id="KW-0963">Cytoplasm</keyword>
<keyword id="KW-0460">Magnesium</keyword>
<keyword id="KW-0479">Metal-binding</keyword>
<keyword id="KW-0548">Nucleotidyltransferase</keyword>
<keyword id="KW-0694">RNA-binding</keyword>
<keyword id="KW-0808">Transferase</keyword>
<evidence type="ECO:0000255" key="1">
    <source>
        <dbReference type="HAMAP-Rule" id="MF_01595"/>
    </source>
</evidence>
<evidence type="ECO:0000256" key="2">
    <source>
        <dbReference type="SAM" id="MobiDB-lite"/>
    </source>
</evidence>
<gene>
    <name evidence="1" type="primary">pnp</name>
    <name type="ordered locus">Reut_A0957</name>
</gene>
<accession>Q473U7</accession>
<organism>
    <name type="scientific">Cupriavidus pinatubonensis (strain JMP 134 / LMG 1197)</name>
    <name type="common">Cupriavidus necator (strain JMP 134)</name>
    <dbReference type="NCBI Taxonomy" id="264198"/>
    <lineage>
        <taxon>Bacteria</taxon>
        <taxon>Pseudomonadati</taxon>
        <taxon>Pseudomonadota</taxon>
        <taxon>Betaproteobacteria</taxon>
        <taxon>Burkholderiales</taxon>
        <taxon>Burkholderiaceae</taxon>
        <taxon>Cupriavidus</taxon>
    </lineage>
</organism>
<name>PNP_CUPPJ</name>
<dbReference type="EC" id="2.7.7.8" evidence="1"/>
<dbReference type="EMBL" id="CP000090">
    <property type="protein sequence ID" value="AAZ60336.1"/>
    <property type="molecule type" value="Genomic_DNA"/>
</dbReference>
<dbReference type="SMR" id="Q473U7"/>
<dbReference type="STRING" id="264198.Reut_A0957"/>
<dbReference type="KEGG" id="reu:Reut_A0957"/>
<dbReference type="eggNOG" id="COG1185">
    <property type="taxonomic scope" value="Bacteria"/>
</dbReference>
<dbReference type="HOGENOM" id="CLU_004217_2_2_4"/>
<dbReference type="OrthoDB" id="9804305at2"/>
<dbReference type="GO" id="GO:0005829">
    <property type="term" value="C:cytosol"/>
    <property type="evidence" value="ECO:0007669"/>
    <property type="project" value="TreeGrafter"/>
</dbReference>
<dbReference type="GO" id="GO:0000175">
    <property type="term" value="F:3'-5'-RNA exonuclease activity"/>
    <property type="evidence" value="ECO:0007669"/>
    <property type="project" value="TreeGrafter"/>
</dbReference>
<dbReference type="GO" id="GO:0000287">
    <property type="term" value="F:magnesium ion binding"/>
    <property type="evidence" value="ECO:0007669"/>
    <property type="project" value="UniProtKB-UniRule"/>
</dbReference>
<dbReference type="GO" id="GO:0004654">
    <property type="term" value="F:polyribonucleotide nucleotidyltransferase activity"/>
    <property type="evidence" value="ECO:0007669"/>
    <property type="project" value="UniProtKB-UniRule"/>
</dbReference>
<dbReference type="GO" id="GO:0003723">
    <property type="term" value="F:RNA binding"/>
    <property type="evidence" value="ECO:0007669"/>
    <property type="project" value="UniProtKB-UniRule"/>
</dbReference>
<dbReference type="GO" id="GO:0006402">
    <property type="term" value="P:mRNA catabolic process"/>
    <property type="evidence" value="ECO:0007669"/>
    <property type="project" value="UniProtKB-UniRule"/>
</dbReference>
<dbReference type="GO" id="GO:0006396">
    <property type="term" value="P:RNA processing"/>
    <property type="evidence" value="ECO:0007669"/>
    <property type="project" value="InterPro"/>
</dbReference>
<dbReference type="CDD" id="cd02393">
    <property type="entry name" value="KH-I_PNPase"/>
    <property type="match status" value="1"/>
</dbReference>
<dbReference type="CDD" id="cd11363">
    <property type="entry name" value="RNase_PH_PNPase_1"/>
    <property type="match status" value="1"/>
</dbReference>
<dbReference type="CDD" id="cd11364">
    <property type="entry name" value="RNase_PH_PNPase_2"/>
    <property type="match status" value="1"/>
</dbReference>
<dbReference type="CDD" id="cd04472">
    <property type="entry name" value="S1_PNPase"/>
    <property type="match status" value="1"/>
</dbReference>
<dbReference type="FunFam" id="3.30.1370.10:FF:000001">
    <property type="entry name" value="Polyribonucleotide nucleotidyltransferase"/>
    <property type="match status" value="1"/>
</dbReference>
<dbReference type="FunFam" id="3.30.230.70:FF:000001">
    <property type="entry name" value="Polyribonucleotide nucleotidyltransferase"/>
    <property type="match status" value="1"/>
</dbReference>
<dbReference type="FunFam" id="3.30.230.70:FF:000002">
    <property type="entry name" value="Polyribonucleotide nucleotidyltransferase"/>
    <property type="match status" value="1"/>
</dbReference>
<dbReference type="FunFam" id="2.40.50.140:FF:000189">
    <property type="entry name" value="Polyribonucleotide nucleotidyltransferase, putative"/>
    <property type="match status" value="1"/>
</dbReference>
<dbReference type="Gene3D" id="3.30.230.70">
    <property type="entry name" value="GHMP Kinase, N-terminal domain"/>
    <property type="match status" value="2"/>
</dbReference>
<dbReference type="Gene3D" id="3.30.1370.10">
    <property type="entry name" value="K Homology domain, type 1"/>
    <property type="match status" value="1"/>
</dbReference>
<dbReference type="Gene3D" id="2.40.50.140">
    <property type="entry name" value="Nucleic acid-binding proteins"/>
    <property type="match status" value="1"/>
</dbReference>
<dbReference type="HAMAP" id="MF_01595">
    <property type="entry name" value="PNPase"/>
    <property type="match status" value="1"/>
</dbReference>
<dbReference type="InterPro" id="IPR001247">
    <property type="entry name" value="ExoRNase_PH_dom1"/>
</dbReference>
<dbReference type="InterPro" id="IPR015847">
    <property type="entry name" value="ExoRNase_PH_dom2"/>
</dbReference>
<dbReference type="InterPro" id="IPR036345">
    <property type="entry name" value="ExoRNase_PH_dom2_sf"/>
</dbReference>
<dbReference type="InterPro" id="IPR004087">
    <property type="entry name" value="KH_dom"/>
</dbReference>
<dbReference type="InterPro" id="IPR004088">
    <property type="entry name" value="KH_dom_type_1"/>
</dbReference>
<dbReference type="InterPro" id="IPR036612">
    <property type="entry name" value="KH_dom_type_1_sf"/>
</dbReference>
<dbReference type="InterPro" id="IPR012340">
    <property type="entry name" value="NA-bd_OB-fold"/>
</dbReference>
<dbReference type="InterPro" id="IPR012162">
    <property type="entry name" value="PNPase"/>
</dbReference>
<dbReference type="InterPro" id="IPR027408">
    <property type="entry name" value="PNPase/RNase_PH_dom_sf"/>
</dbReference>
<dbReference type="InterPro" id="IPR015848">
    <property type="entry name" value="PNPase_PH_RNA-bd_bac/org-type"/>
</dbReference>
<dbReference type="InterPro" id="IPR036456">
    <property type="entry name" value="PNPase_PH_RNA-bd_sf"/>
</dbReference>
<dbReference type="InterPro" id="IPR020568">
    <property type="entry name" value="Ribosomal_Su5_D2-typ_SF"/>
</dbReference>
<dbReference type="InterPro" id="IPR003029">
    <property type="entry name" value="S1_domain"/>
</dbReference>
<dbReference type="NCBIfam" id="TIGR03591">
    <property type="entry name" value="polynuc_phos"/>
    <property type="match status" value="1"/>
</dbReference>
<dbReference type="NCBIfam" id="NF008805">
    <property type="entry name" value="PRK11824.1"/>
    <property type="match status" value="1"/>
</dbReference>
<dbReference type="PANTHER" id="PTHR11252">
    <property type="entry name" value="POLYRIBONUCLEOTIDE NUCLEOTIDYLTRANSFERASE"/>
    <property type="match status" value="1"/>
</dbReference>
<dbReference type="PANTHER" id="PTHR11252:SF0">
    <property type="entry name" value="POLYRIBONUCLEOTIDE NUCLEOTIDYLTRANSFERASE 1, MITOCHONDRIAL"/>
    <property type="match status" value="1"/>
</dbReference>
<dbReference type="Pfam" id="PF00013">
    <property type="entry name" value="KH_1"/>
    <property type="match status" value="1"/>
</dbReference>
<dbReference type="Pfam" id="PF03726">
    <property type="entry name" value="PNPase"/>
    <property type="match status" value="1"/>
</dbReference>
<dbReference type="Pfam" id="PF01138">
    <property type="entry name" value="RNase_PH"/>
    <property type="match status" value="2"/>
</dbReference>
<dbReference type="Pfam" id="PF03725">
    <property type="entry name" value="RNase_PH_C"/>
    <property type="match status" value="2"/>
</dbReference>
<dbReference type="Pfam" id="PF00575">
    <property type="entry name" value="S1"/>
    <property type="match status" value="1"/>
</dbReference>
<dbReference type="PIRSF" id="PIRSF005499">
    <property type="entry name" value="PNPase"/>
    <property type="match status" value="1"/>
</dbReference>
<dbReference type="SMART" id="SM00322">
    <property type="entry name" value="KH"/>
    <property type="match status" value="1"/>
</dbReference>
<dbReference type="SMART" id="SM00316">
    <property type="entry name" value="S1"/>
    <property type="match status" value="1"/>
</dbReference>
<dbReference type="SUPFAM" id="SSF54791">
    <property type="entry name" value="Eukaryotic type KH-domain (KH-domain type I)"/>
    <property type="match status" value="1"/>
</dbReference>
<dbReference type="SUPFAM" id="SSF50249">
    <property type="entry name" value="Nucleic acid-binding proteins"/>
    <property type="match status" value="1"/>
</dbReference>
<dbReference type="SUPFAM" id="SSF46915">
    <property type="entry name" value="Polynucleotide phosphorylase/guanosine pentaphosphate synthase (PNPase/GPSI), domain 3"/>
    <property type="match status" value="1"/>
</dbReference>
<dbReference type="SUPFAM" id="SSF55666">
    <property type="entry name" value="Ribonuclease PH domain 2-like"/>
    <property type="match status" value="2"/>
</dbReference>
<dbReference type="SUPFAM" id="SSF54211">
    <property type="entry name" value="Ribosomal protein S5 domain 2-like"/>
    <property type="match status" value="2"/>
</dbReference>
<dbReference type="PROSITE" id="PS50084">
    <property type="entry name" value="KH_TYPE_1"/>
    <property type="match status" value="1"/>
</dbReference>
<dbReference type="PROSITE" id="PS50126">
    <property type="entry name" value="S1"/>
    <property type="match status" value="1"/>
</dbReference>
<proteinExistence type="inferred from homology"/>
<reference key="1">
    <citation type="journal article" date="2010" name="PLoS ONE">
        <title>The complete multipartite genome sequence of Cupriavidus necator JMP134, a versatile pollutant degrader.</title>
        <authorList>
            <person name="Lykidis A."/>
            <person name="Perez-Pantoja D."/>
            <person name="Ledger T."/>
            <person name="Mavromatis K."/>
            <person name="Anderson I.J."/>
            <person name="Ivanova N.N."/>
            <person name="Hooper S.D."/>
            <person name="Lapidus A."/>
            <person name="Lucas S."/>
            <person name="Gonzalez B."/>
            <person name="Kyrpides N.C."/>
        </authorList>
    </citation>
    <scope>NUCLEOTIDE SEQUENCE [LARGE SCALE GENOMIC DNA]</scope>
    <source>
        <strain>JMP134 / LMG 1197</strain>
    </source>
</reference>
<sequence length="728" mass="77990">MSMFNKVVKQFQWGQHTVRMETGEIARQAGGAVIVDVEDTVVLATVVAAKSPKPGQDFFPLTVDYIEKTYAAGKIPGGFFKREGRPSENETLTSRLIDRPLRPLFPEGFYNDVQVVVHVVSLNPEIPADIPALIGASAALAVSGIPFNGPVGAARIGYKDGQYLLNPTRSQMATSDLDLVVAGTERAVLMVESEANQLSEDVMLGAVVYGHEQMQIAINAIHDLVREGGKPEWDWAPAPKNEALIAKVTEVALPLLQEAYQLRQKSARSQKLKEVSANVTAALAEAGVDADKVEVGNIMFDLEAKIVRGQILGGEPRIDGRDTRTVRPIEIRSSVLPRAHGSALFTRGETQALVVATLGTKSDEQIIDALAGEYRDRFMLHYNMPPFATGETGRVGSPKRREIGHGRLAKRALIPVLPKDDEFAYTIRLVSEITESNGSSSMASVCGGCLALMDAGVPVKAHVAGVAMGLILEGNKFAVLTDILGDEDHLGDMDFKVAGTDNGITALQMDIKVQGITKEIMQVALAQAKEGRLHILGAMQGAMGHARTELSAHAPRMITMKIHPDKIREVIGKGGSTIQALTKETGTTIDIQEDGTITIASTSTDGMAEAKRRIEGITAEAEVGKIYNGTVLKLLDFGAIVNILPGKDGLLHISEIVNERVKDIKDWLKEGQQLRVKLIQADEKGRLRLSLKAALAEEGGSISPVNAGEAAPAPAPAAAPATPSDQQQ</sequence>
<protein>
    <recommendedName>
        <fullName evidence="1">Polyribonucleotide nucleotidyltransferase</fullName>
        <ecNumber evidence="1">2.7.7.8</ecNumber>
    </recommendedName>
    <alternativeName>
        <fullName evidence="1">Polynucleotide phosphorylase</fullName>
        <shortName evidence="1">PNPase</shortName>
    </alternativeName>
</protein>
<feature type="chain" id="PRO_0000329795" description="Polyribonucleotide nucleotidyltransferase">
    <location>
        <begin position="1"/>
        <end position="728"/>
    </location>
</feature>
<feature type="domain" description="KH" evidence="1">
    <location>
        <begin position="555"/>
        <end position="614"/>
    </location>
</feature>
<feature type="domain" description="S1 motif" evidence="1">
    <location>
        <begin position="624"/>
        <end position="692"/>
    </location>
</feature>
<feature type="region of interest" description="Disordered" evidence="2">
    <location>
        <begin position="702"/>
        <end position="728"/>
    </location>
</feature>
<feature type="compositionally biased region" description="Low complexity" evidence="2">
    <location>
        <begin position="710"/>
        <end position="721"/>
    </location>
</feature>
<feature type="binding site" evidence="1">
    <location>
        <position position="488"/>
    </location>
    <ligand>
        <name>Mg(2+)</name>
        <dbReference type="ChEBI" id="CHEBI:18420"/>
    </ligand>
</feature>
<feature type="binding site" evidence="1">
    <location>
        <position position="494"/>
    </location>
    <ligand>
        <name>Mg(2+)</name>
        <dbReference type="ChEBI" id="CHEBI:18420"/>
    </ligand>
</feature>